<name>GLMU_LACLS</name>
<comment type="function">
    <text evidence="1">Catalyzes the last two sequential reactions in the de novo biosynthetic pathway for UDP-N-acetylglucosamine (UDP-GlcNAc). The C-terminal domain catalyzes the transfer of acetyl group from acetyl coenzyme A to glucosamine-1-phosphate (GlcN-1-P) to produce N-acetylglucosamine-1-phosphate (GlcNAc-1-P), which is converted into UDP-GlcNAc by the transfer of uridine 5-monophosphate (from uridine 5-triphosphate), a reaction catalyzed by the N-terminal domain.</text>
</comment>
<comment type="catalytic activity">
    <reaction evidence="1">
        <text>alpha-D-glucosamine 1-phosphate + acetyl-CoA = N-acetyl-alpha-D-glucosamine 1-phosphate + CoA + H(+)</text>
        <dbReference type="Rhea" id="RHEA:13725"/>
        <dbReference type="ChEBI" id="CHEBI:15378"/>
        <dbReference type="ChEBI" id="CHEBI:57287"/>
        <dbReference type="ChEBI" id="CHEBI:57288"/>
        <dbReference type="ChEBI" id="CHEBI:57776"/>
        <dbReference type="ChEBI" id="CHEBI:58516"/>
        <dbReference type="EC" id="2.3.1.157"/>
    </reaction>
</comment>
<comment type="catalytic activity">
    <reaction evidence="1">
        <text>N-acetyl-alpha-D-glucosamine 1-phosphate + UTP + H(+) = UDP-N-acetyl-alpha-D-glucosamine + diphosphate</text>
        <dbReference type="Rhea" id="RHEA:13509"/>
        <dbReference type="ChEBI" id="CHEBI:15378"/>
        <dbReference type="ChEBI" id="CHEBI:33019"/>
        <dbReference type="ChEBI" id="CHEBI:46398"/>
        <dbReference type="ChEBI" id="CHEBI:57705"/>
        <dbReference type="ChEBI" id="CHEBI:57776"/>
        <dbReference type="EC" id="2.7.7.23"/>
    </reaction>
</comment>
<comment type="cofactor">
    <cofactor evidence="1">
        <name>Mg(2+)</name>
        <dbReference type="ChEBI" id="CHEBI:18420"/>
    </cofactor>
    <text evidence="1">Binds 1 Mg(2+) ion per subunit.</text>
</comment>
<comment type="pathway">
    <text evidence="1">Nucleotide-sugar biosynthesis; UDP-N-acetyl-alpha-D-glucosamine biosynthesis; N-acetyl-alpha-D-glucosamine 1-phosphate from alpha-D-glucosamine 6-phosphate (route II): step 2/2.</text>
</comment>
<comment type="pathway">
    <text evidence="1">Nucleotide-sugar biosynthesis; UDP-N-acetyl-alpha-D-glucosamine biosynthesis; UDP-N-acetyl-alpha-D-glucosamine from N-acetyl-alpha-D-glucosamine 1-phosphate: step 1/1.</text>
</comment>
<comment type="pathway">
    <text evidence="1">Bacterial outer membrane biogenesis; LPS lipid A biosynthesis.</text>
</comment>
<comment type="subunit">
    <text evidence="1">Homotrimer.</text>
</comment>
<comment type="subcellular location">
    <subcellularLocation>
        <location evidence="1">Cytoplasm</location>
    </subcellularLocation>
</comment>
<comment type="similarity">
    <text evidence="1">In the N-terminal section; belongs to the N-acetylglucosamine-1-phosphate uridyltransferase family.</text>
</comment>
<comment type="similarity">
    <text evidence="1">In the C-terminal section; belongs to the transferase hexapeptide repeat family.</text>
</comment>
<accession>Q02WW6</accession>
<gene>
    <name evidence="1" type="primary">glmU</name>
    <name type="ordered locus">LACR_2079</name>
</gene>
<keyword id="KW-0012">Acyltransferase</keyword>
<keyword id="KW-0133">Cell shape</keyword>
<keyword id="KW-0961">Cell wall biogenesis/degradation</keyword>
<keyword id="KW-0963">Cytoplasm</keyword>
<keyword id="KW-0460">Magnesium</keyword>
<keyword id="KW-0479">Metal-binding</keyword>
<keyword id="KW-0511">Multifunctional enzyme</keyword>
<keyword id="KW-0548">Nucleotidyltransferase</keyword>
<keyword id="KW-0573">Peptidoglycan synthesis</keyword>
<keyword id="KW-0677">Repeat</keyword>
<keyword id="KW-0808">Transferase</keyword>
<feature type="chain" id="PRO_1000056170" description="Bifunctional protein GlmU">
    <location>
        <begin position="1"/>
        <end position="458"/>
    </location>
</feature>
<feature type="region of interest" description="Pyrophosphorylase" evidence="1">
    <location>
        <begin position="1"/>
        <end position="229"/>
    </location>
</feature>
<feature type="region of interest" description="Linker" evidence="1">
    <location>
        <begin position="230"/>
        <end position="250"/>
    </location>
</feature>
<feature type="region of interest" description="N-acetyltransferase" evidence="1">
    <location>
        <begin position="251"/>
        <end position="458"/>
    </location>
</feature>
<feature type="active site" description="Proton acceptor" evidence="1">
    <location>
        <position position="362"/>
    </location>
</feature>
<feature type="binding site" evidence="1">
    <location>
        <begin position="8"/>
        <end position="11"/>
    </location>
    <ligand>
        <name>UDP-N-acetyl-alpha-D-glucosamine</name>
        <dbReference type="ChEBI" id="CHEBI:57705"/>
    </ligand>
</feature>
<feature type="binding site" evidence="1">
    <location>
        <position position="22"/>
    </location>
    <ligand>
        <name>UDP-N-acetyl-alpha-D-glucosamine</name>
        <dbReference type="ChEBI" id="CHEBI:57705"/>
    </ligand>
</feature>
<feature type="binding site" evidence="1">
    <location>
        <position position="72"/>
    </location>
    <ligand>
        <name>UDP-N-acetyl-alpha-D-glucosamine</name>
        <dbReference type="ChEBI" id="CHEBI:57705"/>
    </ligand>
</feature>
<feature type="binding site" evidence="1">
    <location>
        <begin position="77"/>
        <end position="78"/>
    </location>
    <ligand>
        <name>UDP-N-acetyl-alpha-D-glucosamine</name>
        <dbReference type="ChEBI" id="CHEBI:57705"/>
    </ligand>
</feature>
<feature type="binding site" evidence="1">
    <location>
        <position position="102"/>
    </location>
    <ligand>
        <name>Mg(2+)</name>
        <dbReference type="ChEBI" id="CHEBI:18420"/>
    </ligand>
</feature>
<feature type="binding site" evidence="1">
    <location>
        <position position="139"/>
    </location>
    <ligand>
        <name>UDP-N-acetyl-alpha-D-glucosamine</name>
        <dbReference type="ChEBI" id="CHEBI:57705"/>
    </ligand>
</feature>
<feature type="binding site" evidence="1">
    <location>
        <position position="154"/>
    </location>
    <ligand>
        <name>UDP-N-acetyl-alpha-D-glucosamine</name>
        <dbReference type="ChEBI" id="CHEBI:57705"/>
    </ligand>
</feature>
<feature type="binding site" evidence="1">
    <location>
        <position position="169"/>
    </location>
    <ligand>
        <name>UDP-N-acetyl-alpha-D-glucosamine</name>
        <dbReference type="ChEBI" id="CHEBI:57705"/>
    </ligand>
</feature>
<feature type="binding site" evidence="1">
    <location>
        <position position="227"/>
    </location>
    <ligand>
        <name>Mg(2+)</name>
        <dbReference type="ChEBI" id="CHEBI:18420"/>
    </ligand>
</feature>
<feature type="binding site" evidence="1">
    <location>
        <position position="227"/>
    </location>
    <ligand>
        <name>UDP-N-acetyl-alpha-D-glucosamine</name>
        <dbReference type="ChEBI" id="CHEBI:57705"/>
    </ligand>
</feature>
<feature type="binding site" evidence="1">
    <location>
        <position position="332"/>
    </location>
    <ligand>
        <name>UDP-N-acetyl-alpha-D-glucosamine</name>
        <dbReference type="ChEBI" id="CHEBI:57705"/>
    </ligand>
</feature>
<feature type="binding site" evidence="1">
    <location>
        <position position="350"/>
    </location>
    <ligand>
        <name>UDP-N-acetyl-alpha-D-glucosamine</name>
        <dbReference type="ChEBI" id="CHEBI:57705"/>
    </ligand>
</feature>
<feature type="binding site" evidence="1">
    <location>
        <position position="365"/>
    </location>
    <ligand>
        <name>UDP-N-acetyl-alpha-D-glucosamine</name>
        <dbReference type="ChEBI" id="CHEBI:57705"/>
    </ligand>
</feature>
<feature type="binding site" evidence="1">
    <location>
        <position position="376"/>
    </location>
    <ligand>
        <name>UDP-N-acetyl-alpha-D-glucosamine</name>
        <dbReference type="ChEBI" id="CHEBI:57705"/>
    </ligand>
</feature>
<feature type="binding site" evidence="1">
    <location>
        <position position="379"/>
    </location>
    <ligand>
        <name>acetyl-CoA</name>
        <dbReference type="ChEBI" id="CHEBI:57288"/>
    </ligand>
</feature>
<feature type="binding site" evidence="1">
    <location>
        <position position="404"/>
    </location>
    <ligand>
        <name>acetyl-CoA</name>
        <dbReference type="ChEBI" id="CHEBI:57288"/>
    </ligand>
</feature>
<feature type="binding site" evidence="1">
    <location>
        <position position="422"/>
    </location>
    <ligand>
        <name>acetyl-CoA</name>
        <dbReference type="ChEBI" id="CHEBI:57288"/>
    </ligand>
</feature>
<feature type="binding site" evidence="1">
    <location>
        <position position="439"/>
    </location>
    <ligand>
        <name>acetyl-CoA</name>
        <dbReference type="ChEBI" id="CHEBI:57288"/>
    </ligand>
</feature>
<proteinExistence type="inferred from homology"/>
<evidence type="ECO:0000255" key="1">
    <source>
        <dbReference type="HAMAP-Rule" id="MF_01631"/>
    </source>
</evidence>
<reference key="1">
    <citation type="journal article" date="2006" name="Proc. Natl. Acad. Sci. U.S.A.">
        <title>Comparative genomics of the lactic acid bacteria.</title>
        <authorList>
            <person name="Makarova K.S."/>
            <person name="Slesarev A."/>
            <person name="Wolf Y.I."/>
            <person name="Sorokin A."/>
            <person name="Mirkin B."/>
            <person name="Koonin E.V."/>
            <person name="Pavlov A."/>
            <person name="Pavlova N."/>
            <person name="Karamychev V."/>
            <person name="Polouchine N."/>
            <person name="Shakhova V."/>
            <person name="Grigoriev I."/>
            <person name="Lou Y."/>
            <person name="Rohksar D."/>
            <person name="Lucas S."/>
            <person name="Huang K."/>
            <person name="Goodstein D.M."/>
            <person name="Hawkins T."/>
            <person name="Plengvidhya V."/>
            <person name="Welker D."/>
            <person name="Hughes J."/>
            <person name="Goh Y."/>
            <person name="Benson A."/>
            <person name="Baldwin K."/>
            <person name="Lee J.-H."/>
            <person name="Diaz-Muniz I."/>
            <person name="Dosti B."/>
            <person name="Smeianov V."/>
            <person name="Wechter W."/>
            <person name="Barabote R."/>
            <person name="Lorca G."/>
            <person name="Altermann E."/>
            <person name="Barrangou R."/>
            <person name="Ganesan B."/>
            <person name="Xie Y."/>
            <person name="Rawsthorne H."/>
            <person name="Tamir D."/>
            <person name="Parker C."/>
            <person name="Breidt F."/>
            <person name="Broadbent J.R."/>
            <person name="Hutkins R."/>
            <person name="O'Sullivan D."/>
            <person name="Steele J."/>
            <person name="Unlu G."/>
            <person name="Saier M.H. Jr."/>
            <person name="Klaenhammer T."/>
            <person name="Richardson P."/>
            <person name="Kozyavkin S."/>
            <person name="Weimer B.C."/>
            <person name="Mills D.A."/>
        </authorList>
    </citation>
    <scope>NUCLEOTIDE SEQUENCE [LARGE SCALE GENOMIC DNA]</scope>
    <source>
        <strain>SK11</strain>
    </source>
</reference>
<dbReference type="EC" id="2.7.7.23" evidence="1"/>
<dbReference type="EC" id="2.3.1.157" evidence="1"/>
<dbReference type="EMBL" id="CP000425">
    <property type="protein sequence ID" value="ABJ73556.1"/>
    <property type="molecule type" value="Genomic_DNA"/>
</dbReference>
<dbReference type="RefSeq" id="WP_011676895.1">
    <property type="nucleotide sequence ID" value="NC_008527.1"/>
</dbReference>
<dbReference type="SMR" id="Q02WW6"/>
<dbReference type="KEGG" id="llc:LACR_2079"/>
<dbReference type="HOGENOM" id="CLU_029499_15_2_9"/>
<dbReference type="UniPathway" id="UPA00113">
    <property type="reaction ID" value="UER00532"/>
</dbReference>
<dbReference type="UniPathway" id="UPA00113">
    <property type="reaction ID" value="UER00533"/>
</dbReference>
<dbReference type="UniPathway" id="UPA00973"/>
<dbReference type="Proteomes" id="UP000000240">
    <property type="component" value="Chromosome"/>
</dbReference>
<dbReference type="GO" id="GO:0005737">
    <property type="term" value="C:cytoplasm"/>
    <property type="evidence" value="ECO:0007669"/>
    <property type="project" value="UniProtKB-SubCell"/>
</dbReference>
<dbReference type="GO" id="GO:0016020">
    <property type="term" value="C:membrane"/>
    <property type="evidence" value="ECO:0007669"/>
    <property type="project" value="GOC"/>
</dbReference>
<dbReference type="GO" id="GO:0019134">
    <property type="term" value="F:glucosamine-1-phosphate N-acetyltransferase activity"/>
    <property type="evidence" value="ECO:0007669"/>
    <property type="project" value="UniProtKB-UniRule"/>
</dbReference>
<dbReference type="GO" id="GO:0000287">
    <property type="term" value="F:magnesium ion binding"/>
    <property type="evidence" value="ECO:0007669"/>
    <property type="project" value="UniProtKB-UniRule"/>
</dbReference>
<dbReference type="GO" id="GO:0003977">
    <property type="term" value="F:UDP-N-acetylglucosamine diphosphorylase activity"/>
    <property type="evidence" value="ECO:0007669"/>
    <property type="project" value="UniProtKB-UniRule"/>
</dbReference>
<dbReference type="GO" id="GO:0000902">
    <property type="term" value="P:cell morphogenesis"/>
    <property type="evidence" value="ECO:0007669"/>
    <property type="project" value="UniProtKB-UniRule"/>
</dbReference>
<dbReference type="GO" id="GO:0071555">
    <property type="term" value="P:cell wall organization"/>
    <property type="evidence" value="ECO:0007669"/>
    <property type="project" value="UniProtKB-KW"/>
</dbReference>
<dbReference type="GO" id="GO:0009245">
    <property type="term" value="P:lipid A biosynthetic process"/>
    <property type="evidence" value="ECO:0007669"/>
    <property type="project" value="UniProtKB-UniRule"/>
</dbReference>
<dbReference type="GO" id="GO:0009252">
    <property type="term" value="P:peptidoglycan biosynthetic process"/>
    <property type="evidence" value="ECO:0007669"/>
    <property type="project" value="UniProtKB-UniRule"/>
</dbReference>
<dbReference type="GO" id="GO:0008360">
    <property type="term" value="P:regulation of cell shape"/>
    <property type="evidence" value="ECO:0007669"/>
    <property type="project" value="UniProtKB-KW"/>
</dbReference>
<dbReference type="GO" id="GO:0006048">
    <property type="term" value="P:UDP-N-acetylglucosamine biosynthetic process"/>
    <property type="evidence" value="ECO:0007669"/>
    <property type="project" value="UniProtKB-UniPathway"/>
</dbReference>
<dbReference type="CDD" id="cd02540">
    <property type="entry name" value="GT2_GlmU_N_bac"/>
    <property type="match status" value="1"/>
</dbReference>
<dbReference type="CDD" id="cd03353">
    <property type="entry name" value="LbH_GlmU_C"/>
    <property type="match status" value="1"/>
</dbReference>
<dbReference type="Gene3D" id="2.160.10.10">
    <property type="entry name" value="Hexapeptide repeat proteins"/>
    <property type="match status" value="1"/>
</dbReference>
<dbReference type="Gene3D" id="3.90.550.10">
    <property type="entry name" value="Spore Coat Polysaccharide Biosynthesis Protein SpsA, Chain A"/>
    <property type="match status" value="1"/>
</dbReference>
<dbReference type="HAMAP" id="MF_01631">
    <property type="entry name" value="GlmU"/>
    <property type="match status" value="1"/>
</dbReference>
<dbReference type="InterPro" id="IPR005882">
    <property type="entry name" value="Bifunctional_GlmU"/>
</dbReference>
<dbReference type="InterPro" id="IPR050065">
    <property type="entry name" value="GlmU-like"/>
</dbReference>
<dbReference type="InterPro" id="IPR038009">
    <property type="entry name" value="GlmU_C_LbH"/>
</dbReference>
<dbReference type="InterPro" id="IPR005835">
    <property type="entry name" value="NTP_transferase_dom"/>
</dbReference>
<dbReference type="InterPro" id="IPR029044">
    <property type="entry name" value="Nucleotide-diphossugar_trans"/>
</dbReference>
<dbReference type="InterPro" id="IPR011004">
    <property type="entry name" value="Trimer_LpxA-like_sf"/>
</dbReference>
<dbReference type="NCBIfam" id="TIGR01173">
    <property type="entry name" value="glmU"/>
    <property type="match status" value="1"/>
</dbReference>
<dbReference type="NCBIfam" id="NF010934">
    <property type="entry name" value="PRK14354.1"/>
    <property type="match status" value="1"/>
</dbReference>
<dbReference type="PANTHER" id="PTHR43584:SF3">
    <property type="entry name" value="BIFUNCTIONAL PROTEIN GLMU"/>
    <property type="match status" value="1"/>
</dbReference>
<dbReference type="PANTHER" id="PTHR43584">
    <property type="entry name" value="NUCLEOTIDYL TRANSFERASE"/>
    <property type="match status" value="1"/>
</dbReference>
<dbReference type="Pfam" id="PF00483">
    <property type="entry name" value="NTP_transferase"/>
    <property type="match status" value="1"/>
</dbReference>
<dbReference type="SUPFAM" id="SSF53448">
    <property type="entry name" value="Nucleotide-diphospho-sugar transferases"/>
    <property type="match status" value="1"/>
</dbReference>
<dbReference type="SUPFAM" id="SSF51161">
    <property type="entry name" value="Trimeric LpxA-like enzymes"/>
    <property type="match status" value="1"/>
</dbReference>
<protein>
    <recommendedName>
        <fullName evidence="1">Bifunctional protein GlmU</fullName>
    </recommendedName>
    <domain>
        <recommendedName>
            <fullName evidence="1">UDP-N-acetylglucosamine pyrophosphorylase</fullName>
            <ecNumber evidence="1">2.7.7.23</ecNumber>
        </recommendedName>
        <alternativeName>
            <fullName evidence="1">N-acetylglucosamine-1-phosphate uridyltransferase</fullName>
        </alternativeName>
    </domain>
    <domain>
        <recommendedName>
            <fullName evidence="1">Glucosamine-1-phosphate N-acetyltransferase</fullName>
            <ecNumber evidence="1">2.3.1.157</ecNumber>
        </recommendedName>
    </domain>
</protein>
<organism>
    <name type="scientific">Lactococcus lactis subsp. cremoris (strain SK11)</name>
    <dbReference type="NCBI Taxonomy" id="272622"/>
    <lineage>
        <taxon>Bacteria</taxon>
        <taxon>Bacillati</taxon>
        <taxon>Bacillota</taxon>
        <taxon>Bacilli</taxon>
        <taxon>Lactobacillales</taxon>
        <taxon>Streptococcaceae</taxon>
        <taxon>Lactococcus</taxon>
        <taxon>Lactococcus cremoris subsp. cremoris</taxon>
    </lineage>
</organism>
<sequence length="458" mass="49066">MNKFAIVLAAGKGTRMKSALPKVLHQVAGKSMLAHVLKSVSEVEIAKNVVIVGHEADRVIATLPKGTQFVKQVEQLGTGHAVRIAADLLANEEGATLVIAGDTPLITGETLGALFDYHFAQKATATILTAIAPNPTGYGRIIRDEKGSVEKIVEQKDANDFEKSITEINTGTYIFDNKSLFKALTEITTDNAQGEYYLTDVIEIFKKAGQTIAAHILDDFDESLGVNDRVALSQAEGTMRKRINHEHMVNGVTLIDPATTYIDSEVTIGAETVIEANVTIKGNTFIGKNVLITNGSRIENSEIHSNCEVRNSTVEESRMSVGSNVGPYAHLRPGTVLSEEVHVGNFVEIKGSTLGKGTKAGHLTYIGNATVGEKVNFGAGTITANFDGKNKFNTEIDDFAFIGSNSTIIAPLHIGKNALTAAGSVVTEDVPDEAVEIGRGKQVNKLGRAKKMPHYRGQ</sequence>